<reference key="1">
    <citation type="journal article" date="2007" name="Science">
        <title>The Fusarium graminearum genome reveals a link between localized polymorphism and pathogen specialization.</title>
        <authorList>
            <person name="Cuomo C.A."/>
            <person name="Gueldener U."/>
            <person name="Xu J.-R."/>
            <person name="Trail F."/>
            <person name="Turgeon B.G."/>
            <person name="Di Pietro A."/>
            <person name="Walton J.D."/>
            <person name="Ma L.-J."/>
            <person name="Baker S.E."/>
            <person name="Rep M."/>
            <person name="Adam G."/>
            <person name="Antoniw J."/>
            <person name="Baldwin T."/>
            <person name="Calvo S.E."/>
            <person name="Chang Y.-L."/>
            <person name="DeCaprio D."/>
            <person name="Gale L.R."/>
            <person name="Gnerre S."/>
            <person name="Goswami R.S."/>
            <person name="Hammond-Kosack K."/>
            <person name="Harris L.J."/>
            <person name="Hilburn K."/>
            <person name="Kennell J.C."/>
            <person name="Kroken S."/>
            <person name="Magnuson J.K."/>
            <person name="Mannhaupt G."/>
            <person name="Mauceli E.W."/>
            <person name="Mewes H.-W."/>
            <person name="Mitterbauer R."/>
            <person name="Muehlbauer G."/>
            <person name="Muensterkoetter M."/>
            <person name="Nelson D."/>
            <person name="O'Donnell K."/>
            <person name="Ouellet T."/>
            <person name="Qi W."/>
            <person name="Quesneville H."/>
            <person name="Roncero M.I.G."/>
            <person name="Seong K.-Y."/>
            <person name="Tetko I.V."/>
            <person name="Urban M."/>
            <person name="Waalwijk C."/>
            <person name="Ward T.J."/>
            <person name="Yao J."/>
            <person name="Birren B.W."/>
            <person name="Kistler H.C."/>
        </authorList>
    </citation>
    <scope>NUCLEOTIDE SEQUENCE [LARGE SCALE GENOMIC DNA]</scope>
    <source>
        <strain>ATCC MYA-4620 / CBS 123657 / FGSC 9075 / NRRL 31084 / PH-1</strain>
    </source>
</reference>
<reference key="2">
    <citation type="journal article" date="2010" name="Nature">
        <title>Comparative genomics reveals mobile pathogenicity chromosomes in Fusarium.</title>
        <authorList>
            <person name="Ma L.-J."/>
            <person name="van der Does H.C."/>
            <person name="Borkovich K.A."/>
            <person name="Coleman J.J."/>
            <person name="Daboussi M.-J."/>
            <person name="Di Pietro A."/>
            <person name="Dufresne M."/>
            <person name="Freitag M."/>
            <person name="Grabherr M."/>
            <person name="Henrissat B."/>
            <person name="Houterman P.M."/>
            <person name="Kang S."/>
            <person name="Shim W.-B."/>
            <person name="Woloshuk C."/>
            <person name="Xie X."/>
            <person name="Xu J.-R."/>
            <person name="Antoniw J."/>
            <person name="Baker S.E."/>
            <person name="Bluhm B.H."/>
            <person name="Breakspear A."/>
            <person name="Brown D.W."/>
            <person name="Butchko R.A.E."/>
            <person name="Chapman S."/>
            <person name="Coulson R."/>
            <person name="Coutinho P.M."/>
            <person name="Danchin E.G.J."/>
            <person name="Diener A."/>
            <person name="Gale L.R."/>
            <person name="Gardiner D.M."/>
            <person name="Goff S."/>
            <person name="Hammond-Kosack K.E."/>
            <person name="Hilburn K."/>
            <person name="Hua-Van A."/>
            <person name="Jonkers W."/>
            <person name="Kazan K."/>
            <person name="Kodira C.D."/>
            <person name="Koehrsen M."/>
            <person name="Kumar L."/>
            <person name="Lee Y.-H."/>
            <person name="Li L."/>
            <person name="Manners J.M."/>
            <person name="Miranda-Saavedra D."/>
            <person name="Mukherjee M."/>
            <person name="Park G."/>
            <person name="Park J."/>
            <person name="Park S.-Y."/>
            <person name="Proctor R.H."/>
            <person name="Regev A."/>
            <person name="Ruiz-Roldan M.C."/>
            <person name="Sain D."/>
            <person name="Sakthikumar S."/>
            <person name="Sykes S."/>
            <person name="Schwartz D.C."/>
            <person name="Turgeon B.G."/>
            <person name="Wapinski I."/>
            <person name="Yoder O."/>
            <person name="Young S."/>
            <person name="Zeng Q."/>
            <person name="Zhou S."/>
            <person name="Galagan J."/>
            <person name="Cuomo C.A."/>
            <person name="Kistler H.C."/>
            <person name="Rep M."/>
        </authorList>
    </citation>
    <scope>GENOME REANNOTATION</scope>
    <source>
        <strain>ATCC MYA-4620 / CBS 123657 / FGSC 9075 / NRRL 31084 / PH-1</strain>
    </source>
</reference>
<reference key="3">
    <citation type="journal article" date="2015" name="BMC Genomics">
        <title>The completed genome sequence of the pathogenic ascomycete fungus Fusarium graminearum.</title>
        <authorList>
            <person name="King R."/>
            <person name="Urban M."/>
            <person name="Hammond-Kosack M.C.U."/>
            <person name="Hassani-Pak K."/>
            <person name="Hammond-Kosack K.E."/>
        </authorList>
    </citation>
    <scope>NUCLEOTIDE SEQUENCE [LARGE SCALE GENOMIC DNA]</scope>
    <source>
        <strain>ATCC MYA-4620 / CBS 123657 / FGSC 9075 / NRRL 31084 / PH-1</strain>
    </source>
</reference>
<dbReference type="EMBL" id="DS231668">
    <property type="protein sequence ID" value="ESU16496.1"/>
    <property type="molecule type" value="Genomic_DNA"/>
</dbReference>
<dbReference type="EMBL" id="HG970335">
    <property type="protein sequence ID" value="CEF84954.1"/>
    <property type="molecule type" value="Genomic_DNA"/>
</dbReference>
<dbReference type="RefSeq" id="XP_011327820.1">
    <property type="nucleotide sequence ID" value="XM_011329518.1"/>
</dbReference>
<dbReference type="SMR" id="Q4HTT2"/>
<dbReference type="FunCoup" id="Q4HTT2">
    <property type="interactions" value="996"/>
</dbReference>
<dbReference type="STRING" id="229533.Q4HTT2"/>
<dbReference type="GeneID" id="23558447"/>
<dbReference type="KEGG" id="fgr:FGSG_11626"/>
<dbReference type="VEuPathDB" id="FungiDB:FGRAMPH1_01G26111"/>
<dbReference type="eggNOG" id="KOG1744">
    <property type="taxonomic scope" value="Eukaryota"/>
</dbReference>
<dbReference type="HOGENOM" id="CLU_075666_1_3_1"/>
<dbReference type="InParanoid" id="Q4HTT2"/>
<dbReference type="OrthoDB" id="127153at110618"/>
<dbReference type="Proteomes" id="UP000070720">
    <property type="component" value="Chromosome 4"/>
</dbReference>
<dbReference type="GO" id="GO:0000786">
    <property type="term" value="C:nucleosome"/>
    <property type="evidence" value="ECO:0007669"/>
    <property type="project" value="UniProtKB-KW"/>
</dbReference>
<dbReference type="GO" id="GO:0005634">
    <property type="term" value="C:nucleus"/>
    <property type="evidence" value="ECO:0007669"/>
    <property type="project" value="UniProtKB-SubCell"/>
</dbReference>
<dbReference type="GO" id="GO:0003677">
    <property type="term" value="F:DNA binding"/>
    <property type="evidence" value="ECO:0007669"/>
    <property type="project" value="UniProtKB-KW"/>
</dbReference>
<dbReference type="GO" id="GO:0046982">
    <property type="term" value="F:protein heterodimerization activity"/>
    <property type="evidence" value="ECO:0007669"/>
    <property type="project" value="InterPro"/>
</dbReference>
<dbReference type="GO" id="GO:0030527">
    <property type="term" value="F:structural constituent of chromatin"/>
    <property type="evidence" value="ECO:0007669"/>
    <property type="project" value="InterPro"/>
</dbReference>
<dbReference type="CDD" id="cd22910">
    <property type="entry name" value="HFD_H2B"/>
    <property type="match status" value="1"/>
</dbReference>
<dbReference type="FunFam" id="1.10.20.10:FF:000014">
    <property type="entry name" value="Histone H2B"/>
    <property type="match status" value="1"/>
</dbReference>
<dbReference type="Gene3D" id="1.10.20.10">
    <property type="entry name" value="Histone, subunit A"/>
    <property type="match status" value="1"/>
</dbReference>
<dbReference type="InterPro" id="IPR009072">
    <property type="entry name" value="Histone-fold"/>
</dbReference>
<dbReference type="InterPro" id="IPR007125">
    <property type="entry name" value="Histone_H2A/H2B/H3"/>
</dbReference>
<dbReference type="InterPro" id="IPR000558">
    <property type="entry name" value="Histone_H2B"/>
</dbReference>
<dbReference type="InterPro" id="IPR055333">
    <property type="entry name" value="HISTONE_H2B_site"/>
</dbReference>
<dbReference type="PANTHER" id="PTHR23428">
    <property type="entry name" value="HISTONE H2B"/>
    <property type="match status" value="1"/>
</dbReference>
<dbReference type="Pfam" id="PF00125">
    <property type="entry name" value="Histone"/>
    <property type="match status" value="1"/>
</dbReference>
<dbReference type="PRINTS" id="PR00621">
    <property type="entry name" value="HISTONEH2B"/>
</dbReference>
<dbReference type="SMART" id="SM00427">
    <property type="entry name" value="H2B"/>
    <property type="match status" value="1"/>
</dbReference>
<dbReference type="SUPFAM" id="SSF47113">
    <property type="entry name" value="Histone-fold"/>
    <property type="match status" value="1"/>
</dbReference>
<dbReference type="PROSITE" id="PS00357">
    <property type="entry name" value="HISTONE_H2B"/>
    <property type="match status" value="1"/>
</dbReference>
<name>H2B_GIBZE</name>
<sequence>MAPKAADKKPASKAPATASKAPEKKDAGKKTAASGDKKKRSKSRKETYSSYIYKVLKQVHPDTGISNRAMSILNSFVNDIFERVASEASKLAAYNKKSTISSREIQTSVRLILPGELAKHAVSEGTKAVTKYSSSTK</sequence>
<organism>
    <name type="scientific">Gibberella zeae (strain ATCC MYA-4620 / CBS 123657 / FGSC 9075 / NRRL 31084 / PH-1)</name>
    <name type="common">Wheat head blight fungus</name>
    <name type="synonym">Fusarium graminearum</name>
    <dbReference type="NCBI Taxonomy" id="229533"/>
    <lineage>
        <taxon>Eukaryota</taxon>
        <taxon>Fungi</taxon>
        <taxon>Dikarya</taxon>
        <taxon>Ascomycota</taxon>
        <taxon>Pezizomycotina</taxon>
        <taxon>Sordariomycetes</taxon>
        <taxon>Hypocreomycetidae</taxon>
        <taxon>Hypocreales</taxon>
        <taxon>Nectriaceae</taxon>
        <taxon>Fusarium</taxon>
    </lineage>
</organism>
<evidence type="ECO:0000250" key="1"/>
<evidence type="ECO:0000256" key="2">
    <source>
        <dbReference type="SAM" id="MobiDB-lite"/>
    </source>
</evidence>
<evidence type="ECO:0000305" key="3"/>
<protein>
    <recommendedName>
        <fullName>Histone H2B</fullName>
    </recommendedName>
</protein>
<accession>Q4HTT2</accession>
<accession>A0A098DUD1</accession>
<accession>A0A0E0SEU1</accession>
<accession>V6RPV4</accession>
<proteinExistence type="inferred from homology"/>
<gene>
    <name type="primary">HTB1</name>
    <name type="ORF">FGRRES_11626</name>
    <name type="ORF">FGSG_11626</name>
</gene>
<comment type="function">
    <text>Core component of nucleosome. Nucleosomes wrap and compact DNA into chromatin, limiting DNA accessibility to the cellular machineries which require DNA as a template. Histones thereby play a central role in transcription regulation, DNA repair, DNA replication and chromosomal stability. DNA accessibility is regulated via a complex set of post-translational modifications of histones, also called histone code, and nucleosome remodeling.</text>
</comment>
<comment type="subunit">
    <text>The nucleosome is a histone octamer containing two molecules each of H2A, H2B, H3 and H4 assembled in one H3-H4 heterotetramer and two H2A-H2B heterodimers. The octamer wraps approximately 147 bp of DNA.</text>
</comment>
<comment type="subcellular location">
    <subcellularLocation>
        <location evidence="1">Nucleus</location>
    </subcellularLocation>
    <subcellularLocation>
        <location evidence="1">Chromosome</location>
    </subcellularLocation>
</comment>
<comment type="PTM">
    <text evidence="1">Monoubiquitinated by the UBC2-BRE1 complex to form H2BK123ub1. H2BK123ub1 gives a specific tag for epigenetic transcriptional activation and is also prerequisite for H3K4me and H3K79me formation. H2BK123ub1 also modulates the formation of double-strand breaks during meiosis and is a prerequisite for DNA-damage checkpoint activation (By similarity).</text>
</comment>
<comment type="PTM">
    <text evidence="1">Phosphorylated to form H2BS10ph during progression through meiotic prophase. May be correlated with chromosome condensation (By similarity).</text>
</comment>
<comment type="PTM">
    <text evidence="1">Acetylated by GCN5 to form H2BK11ac and H2BK16ac. H2BK16ac can also be formed by ESA1. Acetylation of N-terminal lysines and particularly formation of H2BK11acK16ac has a positive effect on transcription (By similarity).</text>
</comment>
<comment type="PTM">
    <text evidence="1">Sumoylation to form H2BK6su or H2BK7su, and probably also H2BK16su or H2BK17su, occurs preferentially near the telomeres and represses gene transcription.</text>
</comment>
<comment type="similarity">
    <text evidence="3">Belongs to the histone H2B family.</text>
</comment>
<comment type="caution">
    <text evidence="3">To ensure consistency between histone entries, we follow the 'Brno' nomenclature for histone modifications, with positions referring to those used in the literature for the 'closest' model organism. Due to slight variations in histone sequences between organisms and to the presence of initiator methionine in UniProtKB/Swiss-Prot sequences, the actual positions of modified amino acids in the sequence generally differ. In this entry the following conventions are used: H2BK6ac = acetylated Lys-8; H2BK6su = sumoylated Lys-8; H2BK7ac = acetylated Lys-9; H2BK7su = sumoylated Lys-9; H2BS10ph = phosphorylated Ser-12; H2BK11ac = acetylated Lys-13; H2BK16ac = acetylated Lys-24; H2BK16su = sumoylated Lys-24; H2BK17su = sumoylated Lys-25; H2BK123ub1 = monoubiquitinated Lys-131.</text>
</comment>
<feature type="initiator methionine" description="Removed" evidence="1">
    <location>
        <position position="1"/>
    </location>
</feature>
<feature type="chain" id="PRO_0000245295" description="Histone H2B">
    <location>
        <begin position="2"/>
        <end position="137"/>
    </location>
</feature>
<feature type="region of interest" description="Disordered" evidence="2">
    <location>
        <begin position="1"/>
        <end position="46"/>
    </location>
</feature>
<feature type="compositionally biased region" description="Basic and acidic residues" evidence="2">
    <location>
        <begin position="1"/>
        <end position="10"/>
    </location>
</feature>
<feature type="modified residue" description="N6-acetyllysine; alternate" evidence="1">
    <location>
        <position position="8"/>
    </location>
</feature>
<feature type="modified residue" description="N6-acetyllysine; alternate" evidence="1">
    <location>
        <position position="9"/>
    </location>
</feature>
<feature type="modified residue" description="Phosphoserine" evidence="1">
    <location>
        <position position="12"/>
    </location>
</feature>
<feature type="modified residue" description="N6-acetyllysine" evidence="1">
    <location>
        <position position="13"/>
    </location>
</feature>
<feature type="modified residue" description="N6-acetyllysine; alternate" evidence="1">
    <location>
        <position position="24"/>
    </location>
</feature>
<feature type="cross-link" description="Glycyl lysine isopeptide (Lys-Gly) (interchain with G-Cter in SUMO); alternate" evidence="1">
    <location>
        <position position="8"/>
    </location>
</feature>
<feature type="cross-link" description="Glycyl lysine isopeptide (Lys-Gly) (interchain with G-Cter in SUMO); alternate" evidence="1">
    <location>
        <position position="9"/>
    </location>
</feature>
<feature type="cross-link" description="Glycyl lysine isopeptide (Lys-Gly) (interchain with G-Cter in SUMO); alternate" evidence="1">
    <location>
        <position position="24"/>
    </location>
</feature>
<feature type="cross-link" description="Glycyl lysine isopeptide (Lys-Gly) (interchain with G-Cter in SUMO)" evidence="1">
    <location>
        <position position="25"/>
    </location>
</feature>
<feature type="cross-link" description="Glycyl lysine isopeptide (Lys-Gly) (interchain with G-Cter in ubiquitin)" evidence="1">
    <location>
        <position position="131"/>
    </location>
</feature>
<keyword id="KW-0007">Acetylation</keyword>
<keyword id="KW-0158">Chromosome</keyword>
<keyword id="KW-0238">DNA-binding</keyword>
<keyword id="KW-1017">Isopeptide bond</keyword>
<keyword id="KW-0544">Nucleosome core</keyword>
<keyword id="KW-0539">Nucleus</keyword>
<keyword id="KW-0597">Phosphoprotein</keyword>
<keyword id="KW-1185">Reference proteome</keyword>
<keyword id="KW-0832">Ubl conjugation</keyword>